<dbReference type="EC" id="6.1.1.11" evidence="1"/>
<dbReference type="EMBL" id="CP001217">
    <property type="protein sequence ID" value="ACJ08606.1"/>
    <property type="molecule type" value="Genomic_DNA"/>
</dbReference>
<dbReference type="SMR" id="B6JNX8"/>
<dbReference type="KEGG" id="hpp:HPP12_1458"/>
<dbReference type="HOGENOM" id="CLU_023797_1_1_7"/>
<dbReference type="UniPathway" id="UPA00906">
    <property type="reaction ID" value="UER00895"/>
</dbReference>
<dbReference type="Proteomes" id="UP000008198">
    <property type="component" value="Chromosome"/>
</dbReference>
<dbReference type="GO" id="GO:0005737">
    <property type="term" value="C:cytoplasm"/>
    <property type="evidence" value="ECO:0007669"/>
    <property type="project" value="UniProtKB-SubCell"/>
</dbReference>
<dbReference type="GO" id="GO:0005524">
    <property type="term" value="F:ATP binding"/>
    <property type="evidence" value="ECO:0007669"/>
    <property type="project" value="UniProtKB-UniRule"/>
</dbReference>
<dbReference type="GO" id="GO:0004828">
    <property type="term" value="F:serine-tRNA ligase activity"/>
    <property type="evidence" value="ECO:0007669"/>
    <property type="project" value="UniProtKB-UniRule"/>
</dbReference>
<dbReference type="GO" id="GO:0016260">
    <property type="term" value="P:selenocysteine biosynthetic process"/>
    <property type="evidence" value="ECO:0007669"/>
    <property type="project" value="UniProtKB-UniRule"/>
</dbReference>
<dbReference type="GO" id="GO:0006434">
    <property type="term" value="P:seryl-tRNA aminoacylation"/>
    <property type="evidence" value="ECO:0007669"/>
    <property type="project" value="UniProtKB-UniRule"/>
</dbReference>
<dbReference type="CDD" id="cd00770">
    <property type="entry name" value="SerRS_core"/>
    <property type="match status" value="1"/>
</dbReference>
<dbReference type="Gene3D" id="3.30.930.10">
    <property type="entry name" value="Bira Bifunctional Protein, Domain 2"/>
    <property type="match status" value="1"/>
</dbReference>
<dbReference type="Gene3D" id="1.10.287.40">
    <property type="entry name" value="Serine-tRNA synthetase, tRNA binding domain"/>
    <property type="match status" value="1"/>
</dbReference>
<dbReference type="HAMAP" id="MF_00176">
    <property type="entry name" value="Ser_tRNA_synth_type1"/>
    <property type="match status" value="1"/>
</dbReference>
<dbReference type="InterPro" id="IPR002314">
    <property type="entry name" value="aa-tRNA-synt_IIb"/>
</dbReference>
<dbReference type="InterPro" id="IPR006195">
    <property type="entry name" value="aa-tRNA-synth_II"/>
</dbReference>
<dbReference type="InterPro" id="IPR045864">
    <property type="entry name" value="aa-tRNA-synth_II/BPL/LPL"/>
</dbReference>
<dbReference type="InterPro" id="IPR002317">
    <property type="entry name" value="Ser-tRNA-ligase_type_1"/>
</dbReference>
<dbReference type="InterPro" id="IPR015866">
    <property type="entry name" value="Ser-tRNA-synth_1_N"/>
</dbReference>
<dbReference type="InterPro" id="IPR042103">
    <property type="entry name" value="SerRS_1_N_sf"/>
</dbReference>
<dbReference type="InterPro" id="IPR033729">
    <property type="entry name" value="SerRS_core"/>
</dbReference>
<dbReference type="InterPro" id="IPR010978">
    <property type="entry name" value="tRNA-bd_arm"/>
</dbReference>
<dbReference type="NCBIfam" id="TIGR00414">
    <property type="entry name" value="serS"/>
    <property type="match status" value="1"/>
</dbReference>
<dbReference type="PANTHER" id="PTHR43697:SF1">
    <property type="entry name" value="SERINE--TRNA LIGASE"/>
    <property type="match status" value="1"/>
</dbReference>
<dbReference type="PANTHER" id="PTHR43697">
    <property type="entry name" value="SERYL-TRNA SYNTHETASE"/>
    <property type="match status" value="1"/>
</dbReference>
<dbReference type="Pfam" id="PF02403">
    <property type="entry name" value="Seryl_tRNA_N"/>
    <property type="match status" value="1"/>
</dbReference>
<dbReference type="Pfam" id="PF00587">
    <property type="entry name" value="tRNA-synt_2b"/>
    <property type="match status" value="1"/>
</dbReference>
<dbReference type="PIRSF" id="PIRSF001529">
    <property type="entry name" value="Ser-tRNA-synth_IIa"/>
    <property type="match status" value="1"/>
</dbReference>
<dbReference type="PRINTS" id="PR00981">
    <property type="entry name" value="TRNASYNTHSER"/>
</dbReference>
<dbReference type="SUPFAM" id="SSF55681">
    <property type="entry name" value="Class II aaRS and biotin synthetases"/>
    <property type="match status" value="1"/>
</dbReference>
<dbReference type="SUPFAM" id="SSF46589">
    <property type="entry name" value="tRNA-binding arm"/>
    <property type="match status" value="1"/>
</dbReference>
<dbReference type="PROSITE" id="PS50862">
    <property type="entry name" value="AA_TRNA_LIGASE_II"/>
    <property type="match status" value="1"/>
</dbReference>
<sequence length="415" mass="47305">MIDKKLLLQDFEMVALSLKKRNHAMDDGLERLREVITHYKKQLIELEGLQAFQNKVSKEFGIKMAQKADTSDLKKELESNKIKLNELSKSVSELEQQIDLKLSIIPNLVDEKTPLGANEEDNIEIKKILTPRVFNFKPKEHFELAQQNGWIDFESGVKLAKSRFSVIRGFGAKIYRALIYLMLDFNEKNGFEIIYTPALVNEKMLFGTGQLPKFKEDVFKIENENLYLIPTAEVTLTNLYNDTIISVENLPIKMTAHTPCFRSEAGSAGKDTRGMIRQHQFDKVELVAITHPKESDAMQECMLESASEILRALELPHRFVQLCSGDLGFSASNTIDIEVWLPGQNCYREISSVSNTRDFQARRAKIRFKENQKNQLAHTLNGSSLAVGRTMVALMENHQQADGSIHIPKALEKYL</sequence>
<gene>
    <name evidence="1" type="primary">serS</name>
    <name type="ordered locus">HPP12_1458</name>
</gene>
<accession>B6JNX8</accession>
<keyword id="KW-0030">Aminoacyl-tRNA synthetase</keyword>
<keyword id="KW-0067">ATP-binding</keyword>
<keyword id="KW-0963">Cytoplasm</keyword>
<keyword id="KW-0436">Ligase</keyword>
<keyword id="KW-0547">Nucleotide-binding</keyword>
<keyword id="KW-0648">Protein biosynthesis</keyword>
<feature type="chain" id="PRO_1000098075" description="Serine--tRNA ligase">
    <location>
        <begin position="1"/>
        <end position="415"/>
    </location>
</feature>
<feature type="binding site" evidence="1">
    <location>
        <begin position="231"/>
        <end position="233"/>
    </location>
    <ligand>
        <name>L-serine</name>
        <dbReference type="ChEBI" id="CHEBI:33384"/>
    </ligand>
</feature>
<feature type="binding site" evidence="1">
    <location>
        <begin position="262"/>
        <end position="264"/>
    </location>
    <ligand>
        <name>ATP</name>
        <dbReference type="ChEBI" id="CHEBI:30616"/>
    </ligand>
</feature>
<feature type="binding site" evidence="1">
    <location>
        <position position="285"/>
    </location>
    <ligand>
        <name>L-serine</name>
        <dbReference type="ChEBI" id="CHEBI:33384"/>
    </ligand>
</feature>
<feature type="binding site" evidence="1">
    <location>
        <begin position="349"/>
        <end position="352"/>
    </location>
    <ligand>
        <name>ATP</name>
        <dbReference type="ChEBI" id="CHEBI:30616"/>
    </ligand>
</feature>
<feature type="binding site" evidence="1">
    <location>
        <position position="383"/>
    </location>
    <ligand>
        <name>L-serine</name>
        <dbReference type="ChEBI" id="CHEBI:33384"/>
    </ligand>
</feature>
<organism>
    <name type="scientific">Helicobacter pylori (strain P12)</name>
    <dbReference type="NCBI Taxonomy" id="570508"/>
    <lineage>
        <taxon>Bacteria</taxon>
        <taxon>Pseudomonadati</taxon>
        <taxon>Campylobacterota</taxon>
        <taxon>Epsilonproteobacteria</taxon>
        <taxon>Campylobacterales</taxon>
        <taxon>Helicobacteraceae</taxon>
        <taxon>Helicobacter</taxon>
    </lineage>
</organism>
<comment type="function">
    <text evidence="1">Catalyzes the attachment of serine to tRNA(Ser). Is also able to aminoacylate tRNA(Sec) with serine, to form the misacylated tRNA L-seryl-tRNA(Sec), which will be further converted into selenocysteinyl-tRNA(Sec).</text>
</comment>
<comment type="catalytic activity">
    <reaction evidence="1">
        <text>tRNA(Ser) + L-serine + ATP = L-seryl-tRNA(Ser) + AMP + diphosphate + H(+)</text>
        <dbReference type="Rhea" id="RHEA:12292"/>
        <dbReference type="Rhea" id="RHEA-COMP:9669"/>
        <dbReference type="Rhea" id="RHEA-COMP:9703"/>
        <dbReference type="ChEBI" id="CHEBI:15378"/>
        <dbReference type="ChEBI" id="CHEBI:30616"/>
        <dbReference type="ChEBI" id="CHEBI:33019"/>
        <dbReference type="ChEBI" id="CHEBI:33384"/>
        <dbReference type="ChEBI" id="CHEBI:78442"/>
        <dbReference type="ChEBI" id="CHEBI:78533"/>
        <dbReference type="ChEBI" id="CHEBI:456215"/>
        <dbReference type="EC" id="6.1.1.11"/>
    </reaction>
</comment>
<comment type="catalytic activity">
    <reaction evidence="1">
        <text>tRNA(Sec) + L-serine + ATP = L-seryl-tRNA(Sec) + AMP + diphosphate + H(+)</text>
        <dbReference type="Rhea" id="RHEA:42580"/>
        <dbReference type="Rhea" id="RHEA-COMP:9742"/>
        <dbReference type="Rhea" id="RHEA-COMP:10128"/>
        <dbReference type="ChEBI" id="CHEBI:15378"/>
        <dbReference type="ChEBI" id="CHEBI:30616"/>
        <dbReference type="ChEBI" id="CHEBI:33019"/>
        <dbReference type="ChEBI" id="CHEBI:33384"/>
        <dbReference type="ChEBI" id="CHEBI:78442"/>
        <dbReference type="ChEBI" id="CHEBI:78533"/>
        <dbReference type="ChEBI" id="CHEBI:456215"/>
        <dbReference type="EC" id="6.1.1.11"/>
    </reaction>
</comment>
<comment type="pathway">
    <text evidence="1">Aminoacyl-tRNA biosynthesis; selenocysteinyl-tRNA(Sec) biosynthesis; L-seryl-tRNA(Sec) from L-serine and tRNA(Sec): step 1/1.</text>
</comment>
<comment type="subunit">
    <text evidence="1">Homodimer. The tRNA molecule binds across the dimer.</text>
</comment>
<comment type="subcellular location">
    <subcellularLocation>
        <location evidence="1">Cytoplasm</location>
    </subcellularLocation>
</comment>
<comment type="domain">
    <text evidence="1">Consists of two distinct domains, a catalytic core and a N-terminal extension that is involved in tRNA binding.</text>
</comment>
<comment type="similarity">
    <text evidence="1">Belongs to the class-II aminoacyl-tRNA synthetase family. Type-1 seryl-tRNA synthetase subfamily.</text>
</comment>
<proteinExistence type="inferred from homology"/>
<evidence type="ECO:0000255" key="1">
    <source>
        <dbReference type="HAMAP-Rule" id="MF_00176"/>
    </source>
</evidence>
<name>SYS_HELP2</name>
<reference key="1">
    <citation type="submission" date="2008-10" db="EMBL/GenBank/DDBJ databases">
        <title>The complete genome sequence of Helicobacter pylori strain P12.</title>
        <authorList>
            <person name="Fischer W."/>
            <person name="Windhager L."/>
            <person name="Karnholz A."/>
            <person name="Zeiller M."/>
            <person name="Zimmer R."/>
            <person name="Haas R."/>
        </authorList>
    </citation>
    <scope>NUCLEOTIDE SEQUENCE [LARGE SCALE GENOMIC DNA]</scope>
    <source>
        <strain>P12</strain>
    </source>
</reference>
<protein>
    <recommendedName>
        <fullName evidence="1">Serine--tRNA ligase</fullName>
        <ecNumber evidence="1">6.1.1.11</ecNumber>
    </recommendedName>
    <alternativeName>
        <fullName evidence="1">Seryl-tRNA synthetase</fullName>
        <shortName evidence="1">SerRS</shortName>
    </alternativeName>
    <alternativeName>
        <fullName evidence="1">Seryl-tRNA(Ser/Sec) synthetase</fullName>
    </alternativeName>
</protein>